<proteinExistence type="inferred from homology"/>
<protein>
    <recommendedName>
        <fullName evidence="1">Deoxyribose-phosphate aldolase</fullName>
        <shortName evidence="1">DERA</shortName>
        <ecNumber evidence="1">4.1.2.4</ecNumber>
    </recommendedName>
    <alternativeName>
        <fullName evidence="1">2-deoxy-D-ribose 5-phosphate aldolase</fullName>
    </alternativeName>
    <alternativeName>
        <fullName evidence="1">Phosphodeoxyriboaldolase</fullName>
        <shortName evidence="1">Deoxyriboaldolase</shortName>
    </alternativeName>
</protein>
<comment type="function">
    <text evidence="1">Catalyzes a reversible aldol reaction between acetaldehyde and D-glyceraldehyde 3-phosphate to generate 2-deoxy-D-ribose 5-phosphate.</text>
</comment>
<comment type="catalytic activity">
    <reaction evidence="1">
        <text>2-deoxy-D-ribose 5-phosphate = D-glyceraldehyde 3-phosphate + acetaldehyde</text>
        <dbReference type="Rhea" id="RHEA:12821"/>
        <dbReference type="ChEBI" id="CHEBI:15343"/>
        <dbReference type="ChEBI" id="CHEBI:59776"/>
        <dbReference type="ChEBI" id="CHEBI:62877"/>
        <dbReference type="EC" id="4.1.2.4"/>
    </reaction>
</comment>
<comment type="pathway">
    <text evidence="1">Carbohydrate degradation; 2-deoxy-D-ribose 1-phosphate degradation; D-glyceraldehyde 3-phosphate and acetaldehyde from 2-deoxy-alpha-D-ribose 1-phosphate: step 2/2.</text>
</comment>
<comment type="subcellular location">
    <subcellularLocation>
        <location evidence="1">Cytoplasm</location>
    </subcellularLocation>
</comment>
<comment type="similarity">
    <text evidence="1">Belongs to the DeoC/FbaB aldolase family. DeoC type 1 subfamily.</text>
</comment>
<sequence length="226" mass="24521">MLHLVDFALLKPYLTVEEIVEGARKAERLGVAAYCVNPVYAAVVRPLLSRVKLCVVVDFPFGALPTAARASLASKLAEIAEELDVVAPIGLVKSRRWADVRRDLISVVGASGGRVVKVIVEEPYLTDEERYRLYDIVAESGAHFIKSSTGFAEEAYASRLGNPVHSTPERAAAIAKYIRERGYKLGVKMAGGIRTKEQARAIIEAIGFGEDPTRVRLGTSTPEALA</sequence>
<organism>
    <name type="scientific">Pyrobaculum arsenaticum (strain DSM 13514 / JCM 11321 / PZ6)</name>
    <dbReference type="NCBI Taxonomy" id="340102"/>
    <lineage>
        <taxon>Archaea</taxon>
        <taxon>Thermoproteota</taxon>
        <taxon>Thermoprotei</taxon>
        <taxon>Thermoproteales</taxon>
        <taxon>Thermoproteaceae</taxon>
        <taxon>Pyrobaculum</taxon>
    </lineage>
</organism>
<keyword id="KW-0963">Cytoplasm</keyword>
<keyword id="KW-0456">Lyase</keyword>
<keyword id="KW-0704">Schiff base</keyword>
<dbReference type="EC" id="4.1.2.4" evidence="1"/>
<dbReference type="EMBL" id="CP000660">
    <property type="protein sequence ID" value="ABP49914.1"/>
    <property type="molecule type" value="Genomic_DNA"/>
</dbReference>
<dbReference type="RefSeq" id="WP_011899822.1">
    <property type="nucleotide sequence ID" value="NC_009376.1"/>
</dbReference>
<dbReference type="SMR" id="A4WHP7"/>
<dbReference type="STRING" id="340102.Pars_0301"/>
<dbReference type="GeneID" id="5054261"/>
<dbReference type="KEGG" id="pas:Pars_0301"/>
<dbReference type="HOGENOM" id="CLU_053595_0_2_2"/>
<dbReference type="OrthoDB" id="31145at2157"/>
<dbReference type="PhylomeDB" id="A4WHP7"/>
<dbReference type="UniPathway" id="UPA00002">
    <property type="reaction ID" value="UER00468"/>
</dbReference>
<dbReference type="Proteomes" id="UP000001567">
    <property type="component" value="Chromosome"/>
</dbReference>
<dbReference type="GO" id="GO:0005737">
    <property type="term" value="C:cytoplasm"/>
    <property type="evidence" value="ECO:0007669"/>
    <property type="project" value="UniProtKB-SubCell"/>
</dbReference>
<dbReference type="GO" id="GO:0004139">
    <property type="term" value="F:deoxyribose-phosphate aldolase activity"/>
    <property type="evidence" value="ECO:0007669"/>
    <property type="project" value="UniProtKB-UniRule"/>
</dbReference>
<dbReference type="GO" id="GO:0006018">
    <property type="term" value="P:2-deoxyribose 1-phosphate catabolic process"/>
    <property type="evidence" value="ECO:0007669"/>
    <property type="project" value="UniProtKB-UniRule"/>
</dbReference>
<dbReference type="GO" id="GO:0016052">
    <property type="term" value="P:carbohydrate catabolic process"/>
    <property type="evidence" value="ECO:0007669"/>
    <property type="project" value="TreeGrafter"/>
</dbReference>
<dbReference type="GO" id="GO:0009264">
    <property type="term" value="P:deoxyribonucleotide catabolic process"/>
    <property type="evidence" value="ECO:0007669"/>
    <property type="project" value="InterPro"/>
</dbReference>
<dbReference type="CDD" id="cd00959">
    <property type="entry name" value="DeoC"/>
    <property type="match status" value="1"/>
</dbReference>
<dbReference type="Gene3D" id="3.20.20.70">
    <property type="entry name" value="Aldolase class I"/>
    <property type="match status" value="1"/>
</dbReference>
<dbReference type="HAMAP" id="MF_00114">
    <property type="entry name" value="DeoC_type1"/>
    <property type="match status" value="1"/>
</dbReference>
<dbReference type="InterPro" id="IPR013785">
    <property type="entry name" value="Aldolase_TIM"/>
</dbReference>
<dbReference type="InterPro" id="IPR011343">
    <property type="entry name" value="DeoC"/>
</dbReference>
<dbReference type="InterPro" id="IPR002915">
    <property type="entry name" value="DeoC/FbaB/LacD_aldolase"/>
</dbReference>
<dbReference type="InterPro" id="IPR028581">
    <property type="entry name" value="DeoC_typeI"/>
</dbReference>
<dbReference type="NCBIfam" id="TIGR00126">
    <property type="entry name" value="deoC"/>
    <property type="match status" value="1"/>
</dbReference>
<dbReference type="PANTHER" id="PTHR10889">
    <property type="entry name" value="DEOXYRIBOSE-PHOSPHATE ALDOLASE"/>
    <property type="match status" value="1"/>
</dbReference>
<dbReference type="PANTHER" id="PTHR10889:SF1">
    <property type="entry name" value="DEOXYRIBOSE-PHOSPHATE ALDOLASE"/>
    <property type="match status" value="1"/>
</dbReference>
<dbReference type="PIRSF" id="PIRSF001357">
    <property type="entry name" value="DeoC"/>
    <property type="match status" value="1"/>
</dbReference>
<dbReference type="SMART" id="SM01133">
    <property type="entry name" value="DeoC"/>
    <property type="match status" value="1"/>
</dbReference>
<dbReference type="SUPFAM" id="SSF51569">
    <property type="entry name" value="Aldolase"/>
    <property type="match status" value="1"/>
</dbReference>
<feature type="chain" id="PRO_1000015327" description="Deoxyribose-phosphate aldolase">
    <location>
        <begin position="1"/>
        <end position="226"/>
    </location>
</feature>
<feature type="active site" description="Proton donor/acceptor" evidence="1">
    <location>
        <position position="84"/>
    </location>
</feature>
<feature type="active site" description="Schiff-base intermediate with acetaldehyde" evidence="1">
    <location>
        <position position="146"/>
    </location>
</feature>
<feature type="active site" description="Proton donor/acceptor" evidence="1">
    <location>
        <position position="188"/>
    </location>
</feature>
<accession>A4WHP7</accession>
<evidence type="ECO:0000255" key="1">
    <source>
        <dbReference type="HAMAP-Rule" id="MF_00114"/>
    </source>
</evidence>
<name>DEOC_PYRAR</name>
<gene>
    <name evidence="1" type="primary">deoC</name>
    <name type="ordered locus">Pars_0301</name>
</gene>
<reference key="1">
    <citation type="submission" date="2007-04" db="EMBL/GenBank/DDBJ databases">
        <title>Complete sequence of Pyrobaculum arsenaticum DSM 13514.</title>
        <authorList>
            <consortium name="US DOE Joint Genome Institute"/>
            <person name="Copeland A."/>
            <person name="Lucas S."/>
            <person name="Lapidus A."/>
            <person name="Barry K."/>
            <person name="Glavina del Rio T."/>
            <person name="Dalin E."/>
            <person name="Tice H."/>
            <person name="Pitluck S."/>
            <person name="Chain P."/>
            <person name="Malfatti S."/>
            <person name="Shin M."/>
            <person name="Vergez L."/>
            <person name="Schmutz J."/>
            <person name="Larimer F."/>
            <person name="Land M."/>
            <person name="Hauser L."/>
            <person name="Kyrpides N."/>
            <person name="Mikhailova N."/>
            <person name="Cozen A.E."/>
            <person name="Fitz-Gibbon S.T."/>
            <person name="House C.H."/>
            <person name="Saltikov C."/>
            <person name="Lowe T.M."/>
            <person name="Richardson P."/>
        </authorList>
    </citation>
    <scope>NUCLEOTIDE SEQUENCE [LARGE SCALE GENOMIC DNA]</scope>
    <source>
        <strain>ATCC 700994 / DSM 13514 / JCM 11321 / PZ6</strain>
    </source>
</reference>